<reference key="1">
    <citation type="submission" date="2008-10" db="EMBL/GenBank/DDBJ databases">
        <title>Genome sequence of Bacillus cereus AH187.</title>
        <authorList>
            <person name="Dodson R.J."/>
            <person name="Durkin A.S."/>
            <person name="Rosovitz M.J."/>
            <person name="Rasko D.A."/>
            <person name="Kolsto A.B."/>
            <person name="Okstad O.A."/>
            <person name="Ravel J."/>
            <person name="Sutton G."/>
        </authorList>
    </citation>
    <scope>NUCLEOTIDE SEQUENCE [LARGE SCALE GENOMIC DNA]</scope>
    <source>
        <strain>AH187</strain>
    </source>
</reference>
<sequence length="110" mass="13310">MLEKTTRMNYLFDFYQSLLTQKQRSYMSLYYLDDLSLGEIAEEFDVSRQAVYDNIKRTEAMLEEYEEKLVLLQKFQERQRLVAKLKQLISEEEHVNEEMKQVVEAIEKLD</sequence>
<feature type="chain" id="PRO_1000197584" description="UPF0122 protein BCAH187_A3894">
    <location>
        <begin position="1"/>
        <end position="110"/>
    </location>
</feature>
<proteinExistence type="inferred from homology"/>
<name>Y3894_BACC7</name>
<comment type="function">
    <text evidence="1">Might take part in the signal recognition particle (SRP) pathway. This is inferred from the conservation of its genetic proximity to ftsY/ffh. May be a regulatory protein.</text>
</comment>
<comment type="similarity">
    <text evidence="1">Belongs to the UPF0122 family.</text>
</comment>
<dbReference type="EMBL" id="CP001177">
    <property type="protein sequence ID" value="ACJ78529.1"/>
    <property type="molecule type" value="Genomic_DNA"/>
</dbReference>
<dbReference type="SMR" id="B7HLH9"/>
<dbReference type="KEGG" id="bcr:BCAH187_A3894"/>
<dbReference type="HOGENOM" id="CLU_129218_1_0_9"/>
<dbReference type="Proteomes" id="UP000002214">
    <property type="component" value="Chromosome"/>
</dbReference>
<dbReference type="Gene3D" id="1.10.10.10">
    <property type="entry name" value="Winged helix-like DNA-binding domain superfamily/Winged helix DNA-binding domain"/>
    <property type="match status" value="1"/>
</dbReference>
<dbReference type="HAMAP" id="MF_00245">
    <property type="entry name" value="UPF0122"/>
    <property type="match status" value="1"/>
</dbReference>
<dbReference type="InterPro" id="IPR013324">
    <property type="entry name" value="RNA_pol_sigma_r3/r4-like"/>
</dbReference>
<dbReference type="InterPro" id="IPR007394">
    <property type="entry name" value="UPF0122"/>
</dbReference>
<dbReference type="InterPro" id="IPR054831">
    <property type="entry name" value="UPF0122_fam_protein"/>
</dbReference>
<dbReference type="InterPro" id="IPR036388">
    <property type="entry name" value="WH-like_DNA-bd_sf"/>
</dbReference>
<dbReference type="NCBIfam" id="NF001068">
    <property type="entry name" value="PRK00118.1-4"/>
    <property type="match status" value="1"/>
</dbReference>
<dbReference type="NCBIfam" id="NF001070">
    <property type="entry name" value="PRK00118.1-6"/>
    <property type="match status" value="1"/>
</dbReference>
<dbReference type="NCBIfam" id="NF045758">
    <property type="entry name" value="YlxM"/>
    <property type="match status" value="1"/>
</dbReference>
<dbReference type="PANTHER" id="PTHR40083">
    <property type="entry name" value="UPF0122 PROTEIN CBO2450/CLC_2298"/>
    <property type="match status" value="1"/>
</dbReference>
<dbReference type="PANTHER" id="PTHR40083:SF1">
    <property type="entry name" value="UPF0122 PROTEIN YLXM"/>
    <property type="match status" value="1"/>
</dbReference>
<dbReference type="Pfam" id="PF04297">
    <property type="entry name" value="UPF0122"/>
    <property type="match status" value="1"/>
</dbReference>
<dbReference type="SUPFAM" id="SSF88659">
    <property type="entry name" value="Sigma3 and sigma4 domains of RNA polymerase sigma factors"/>
    <property type="match status" value="1"/>
</dbReference>
<gene>
    <name type="ordered locus">BCAH187_A3894</name>
</gene>
<organism>
    <name type="scientific">Bacillus cereus (strain AH187)</name>
    <dbReference type="NCBI Taxonomy" id="405534"/>
    <lineage>
        <taxon>Bacteria</taxon>
        <taxon>Bacillati</taxon>
        <taxon>Bacillota</taxon>
        <taxon>Bacilli</taxon>
        <taxon>Bacillales</taxon>
        <taxon>Bacillaceae</taxon>
        <taxon>Bacillus</taxon>
        <taxon>Bacillus cereus group</taxon>
    </lineage>
</organism>
<protein>
    <recommendedName>
        <fullName evidence="1">UPF0122 protein BCAH187_A3894</fullName>
    </recommendedName>
</protein>
<accession>B7HLH9</accession>
<evidence type="ECO:0000255" key="1">
    <source>
        <dbReference type="HAMAP-Rule" id="MF_00245"/>
    </source>
</evidence>